<comment type="function">
    <text evidence="2">Catalyzes the transfer of the acetyl group from acetyl coenzyme A to the free amino group of arylamines and hydrazines. Is able to utilize not only acetyl-CoA, but also n-propionyl-CoA and acetoacetyl-CoA as acyl donors, although at a lower rate. As acetyl-CoA and propionyl-CoA are products of cholesterol catabolism and the nat gene is likely present in the same operon than genes involved in cholesterol degradation, this enzyme could have a role in the utilization and regulation of these CoA species.</text>
</comment>
<comment type="function">
    <text evidence="2">It has been reported that overexpression of this enzyme may be responsible for increased resistance to the front-line antitubercular drug isoniazid, by acetylating and hence inactivating the prodrug. However, isoniazid is an extremely poor substrate for the enzyme; therefore, the expression of this enzyme is unlikely to be a significant cause of isoniazid resistance in M.tuberculosis.</text>
</comment>
<comment type="catalytic activity">
    <reaction evidence="2">
        <text>an arylamine + acetyl-CoA = an N-acetylarylamine + CoA</text>
        <dbReference type="Rhea" id="RHEA:16613"/>
        <dbReference type="ChEBI" id="CHEBI:13790"/>
        <dbReference type="ChEBI" id="CHEBI:50471"/>
        <dbReference type="ChEBI" id="CHEBI:57287"/>
        <dbReference type="ChEBI" id="CHEBI:57288"/>
        <dbReference type="EC" id="2.3.1.5"/>
    </reaction>
</comment>
<comment type="subunit">
    <text evidence="1">Homodimer and homotetramer.</text>
</comment>
<comment type="similarity">
    <text evidence="3">Belongs to the arylamine N-acetyltransferase family.</text>
</comment>
<reference key="1">
    <citation type="journal article" date="2002" name="J. Bacteriol.">
        <title>Whole-genome comparison of Mycobacterium tuberculosis clinical and laboratory strains.</title>
        <authorList>
            <person name="Fleischmann R.D."/>
            <person name="Alland D."/>
            <person name="Eisen J.A."/>
            <person name="Carpenter L."/>
            <person name="White O."/>
            <person name="Peterson J.D."/>
            <person name="DeBoy R.T."/>
            <person name="Dodson R.J."/>
            <person name="Gwinn M.L."/>
            <person name="Haft D.H."/>
            <person name="Hickey E.K."/>
            <person name="Kolonay J.F."/>
            <person name="Nelson W.C."/>
            <person name="Umayam L.A."/>
            <person name="Ermolaeva M.D."/>
            <person name="Salzberg S.L."/>
            <person name="Delcher A."/>
            <person name="Utterback T.R."/>
            <person name="Weidman J.F."/>
            <person name="Khouri H.M."/>
            <person name="Gill J."/>
            <person name="Mikula A."/>
            <person name="Bishai W."/>
            <person name="Jacobs W.R. Jr."/>
            <person name="Venter J.C."/>
            <person name="Fraser C.M."/>
        </authorList>
    </citation>
    <scope>NUCLEOTIDE SEQUENCE [LARGE SCALE GENOMIC DNA]</scope>
    <source>
        <strain>CDC 1551 / Oshkosh</strain>
    </source>
</reference>
<protein>
    <recommendedName>
        <fullName>Arylamine N-acetyltransferase</fullName>
        <shortName>NAT</shortName>
        <ecNumber evidence="2">2.3.1.5</ecNumber>
    </recommendedName>
</protein>
<accession>P9WJI4</accession>
<accession>L0TCY1</accession>
<accession>P0A5L8</accession>
<accession>P96848</accession>
<feature type="chain" id="PRO_0000427824" description="Arylamine N-acetyltransferase">
    <location>
        <begin position="1"/>
        <end position="283"/>
    </location>
</feature>
<feature type="active site" description="Acyl-thioester intermediate" evidence="2">
    <location>
        <position position="70"/>
    </location>
</feature>
<feature type="active site" evidence="2">
    <location>
        <position position="110"/>
    </location>
</feature>
<feature type="active site" evidence="2">
    <location>
        <position position="127"/>
    </location>
</feature>
<name>NAT_MYCTO</name>
<keyword id="KW-0012">Acyltransferase</keyword>
<keyword id="KW-1185">Reference proteome</keyword>
<keyword id="KW-0808">Transferase</keyword>
<gene>
    <name type="primary">nat</name>
    <name type="ordered locus">MT3671</name>
</gene>
<dbReference type="EC" id="2.3.1.5" evidence="2"/>
<dbReference type="EMBL" id="AE000516">
    <property type="protein sequence ID" value="AAK48028.1"/>
    <property type="molecule type" value="Genomic_DNA"/>
</dbReference>
<dbReference type="RefSeq" id="WP_003419364.1">
    <property type="nucleotide sequence ID" value="NZ_KK341227.1"/>
</dbReference>
<dbReference type="SMR" id="P9WJI4"/>
<dbReference type="KEGG" id="mtc:MT3671"/>
<dbReference type="PATRIC" id="fig|83331.31.peg.3951"/>
<dbReference type="HOGENOM" id="CLU_049918_1_1_11"/>
<dbReference type="Proteomes" id="UP000001020">
    <property type="component" value="Chromosome"/>
</dbReference>
<dbReference type="GO" id="GO:0004060">
    <property type="term" value="F:arylamine N-acetyltransferase activity"/>
    <property type="evidence" value="ECO:0007669"/>
    <property type="project" value="UniProtKB-EC"/>
</dbReference>
<dbReference type="Gene3D" id="3.30.2140.10">
    <property type="entry name" value="Arylamine N-acetyltransferase"/>
    <property type="match status" value="1"/>
</dbReference>
<dbReference type="Gene3D" id="2.40.128.150">
    <property type="entry name" value="Cysteine proteinases"/>
    <property type="match status" value="1"/>
</dbReference>
<dbReference type="InterPro" id="IPR001447">
    <property type="entry name" value="Arylamine_N-AcTrfase"/>
</dbReference>
<dbReference type="InterPro" id="IPR038765">
    <property type="entry name" value="Papain-like_cys_pep_sf"/>
</dbReference>
<dbReference type="PANTHER" id="PTHR11786:SF0">
    <property type="entry name" value="ARYLAMINE N-ACETYLTRANSFERASE 4-RELATED"/>
    <property type="match status" value="1"/>
</dbReference>
<dbReference type="PANTHER" id="PTHR11786">
    <property type="entry name" value="N-HYDROXYARYLAMINE O-ACETYLTRANSFERASE"/>
    <property type="match status" value="1"/>
</dbReference>
<dbReference type="Pfam" id="PF00797">
    <property type="entry name" value="Acetyltransf_2"/>
    <property type="match status" value="1"/>
</dbReference>
<dbReference type="SUPFAM" id="SSF54001">
    <property type="entry name" value="Cysteine proteinases"/>
    <property type="match status" value="1"/>
</dbReference>
<sequence>MALDLTAYFDRINYRGATDPTLDVLQDLVTVHSRTIPFENLDPLLGVPVDDLSPQALADKLVLRRRGGYCFEHNGLMGYVLAELGYRVRRFAARVVWKLAPDAPLPPQTHTLLGVTFPGSGGCYLVDVGFGGQTPTSPLRLETGAVQPTTHEPYRLEDRVDGFVLQAMVRDTWQTLYEFTTQTRPQIDLKVASWYASTHPASKFVTGLTAAVITDDARWNLSGRDLAVHRAGGTEKIRLADAAAVVDTLSERFGINVADIGERGALETRIDELLARQPGADAP</sequence>
<proteinExistence type="inferred from homology"/>
<evidence type="ECO:0000250" key="1">
    <source>
        <dbReference type="UniProtKB" id="O86309"/>
    </source>
</evidence>
<evidence type="ECO:0000250" key="2">
    <source>
        <dbReference type="UniProtKB" id="P9WJI5"/>
    </source>
</evidence>
<evidence type="ECO:0000305" key="3"/>
<organism>
    <name type="scientific">Mycobacterium tuberculosis (strain CDC 1551 / Oshkosh)</name>
    <dbReference type="NCBI Taxonomy" id="83331"/>
    <lineage>
        <taxon>Bacteria</taxon>
        <taxon>Bacillati</taxon>
        <taxon>Actinomycetota</taxon>
        <taxon>Actinomycetes</taxon>
        <taxon>Mycobacteriales</taxon>
        <taxon>Mycobacteriaceae</taxon>
        <taxon>Mycobacterium</taxon>
        <taxon>Mycobacterium tuberculosis complex</taxon>
    </lineage>
</organism>